<organism>
    <name type="scientific">Francisella philomiragia subsp. philomiragia (strain ATCC 25017 / CCUG 19701 / FSC 153 / O#319-036)</name>
    <dbReference type="NCBI Taxonomy" id="484022"/>
    <lineage>
        <taxon>Bacteria</taxon>
        <taxon>Pseudomonadati</taxon>
        <taxon>Pseudomonadota</taxon>
        <taxon>Gammaproteobacteria</taxon>
        <taxon>Thiotrichales</taxon>
        <taxon>Francisellaceae</taxon>
        <taxon>Francisella</taxon>
    </lineage>
</organism>
<proteinExistence type="inferred from homology"/>
<reference key="1">
    <citation type="submission" date="2007-12" db="EMBL/GenBank/DDBJ databases">
        <title>Complete sequence of chromosome of Francisella philomiragia subsp. philomiragia ATCC 25017.</title>
        <authorList>
            <consortium name="US DOE Joint Genome Institute"/>
            <person name="Copeland A."/>
            <person name="Lucas S."/>
            <person name="Lapidus A."/>
            <person name="Barry K."/>
            <person name="Detter J.C."/>
            <person name="Glavina del Rio T."/>
            <person name="Hammon N."/>
            <person name="Israni S."/>
            <person name="Dalin E."/>
            <person name="Tice H."/>
            <person name="Pitluck S."/>
            <person name="Chain P."/>
            <person name="Malfatti S."/>
            <person name="Shin M."/>
            <person name="Vergez L."/>
            <person name="Schmutz J."/>
            <person name="Larimer F."/>
            <person name="Land M."/>
            <person name="Hauser L."/>
            <person name="Richardson P."/>
        </authorList>
    </citation>
    <scope>NUCLEOTIDE SEQUENCE [LARGE SCALE GENOMIC DNA]</scope>
    <source>
        <strain>ATCC 25017 / CCUG 19701 / FSC 153 / O#319-036</strain>
    </source>
</reference>
<dbReference type="EC" id="1.14.-.-" evidence="1"/>
<dbReference type="EMBL" id="CP000937">
    <property type="protein sequence ID" value="ABZ88069.1"/>
    <property type="molecule type" value="Genomic_DNA"/>
</dbReference>
<dbReference type="SMR" id="B0U150"/>
<dbReference type="KEGG" id="fph:Fphi_1841"/>
<dbReference type="eggNOG" id="COG1054">
    <property type="taxonomic scope" value="Bacteria"/>
</dbReference>
<dbReference type="HOGENOM" id="CLU_038878_0_0_6"/>
<dbReference type="GO" id="GO:0016705">
    <property type="term" value="F:oxidoreductase activity, acting on paired donors, with incorporation or reduction of molecular oxygen"/>
    <property type="evidence" value="ECO:0007669"/>
    <property type="project" value="UniProtKB-UniRule"/>
</dbReference>
<dbReference type="GO" id="GO:0006400">
    <property type="term" value="P:tRNA modification"/>
    <property type="evidence" value="ECO:0007669"/>
    <property type="project" value="UniProtKB-UniRule"/>
</dbReference>
<dbReference type="CDD" id="cd01518">
    <property type="entry name" value="RHOD_YceA"/>
    <property type="match status" value="1"/>
</dbReference>
<dbReference type="Gene3D" id="3.30.70.100">
    <property type="match status" value="1"/>
</dbReference>
<dbReference type="Gene3D" id="3.40.250.10">
    <property type="entry name" value="Rhodanese-like domain"/>
    <property type="match status" value="1"/>
</dbReference>
<dbReference type="HAMAP" id="MF_00469">
    <property type="entry name" value="TrhO"/>
    <property type="match status" value="1"/>
</dbReference>
<dbReference type="InterPro" id="IPR001763">
    <property type="entry name" value="Rhodanese-like_dom"/>
</dbReference>
<dbReference type="InterPro" id="IPR036873">
    <property type="entry name" value="Rhodanese-like_dom_sf"/>
</dbReference>
<dbReference type="InterPro" id="IPR020936">
    <property type="entry name" value="TrhO"/>
</dbReference>
<dbReference type="InterPro" id="IPR040503">
    <property type="entry name" value="TRHO_N"/>
</dbReference>
<dbReference type="NCBIfam" id="NF001136">
    <property type="entry name" value="PRK00142.1-4"/>
    <property type="match status" value="1"/>
</dbReference>
<dbReference type="PANTHER" id="PTHR43268:SF3">
    <property type="entry name" value="RHODANESE-LIKE DOMAIN-CONTAINING PROTEIN 7-RELATED"/>
    <property type="match status" value="1"/>
</dbReference>
<dbReference type="PANTHER" id="PTHR43268">
    <property type="entry name" value="THIOSULFATE SULFURTRANSFERASE/RHODANESE-LIKE DOMAIN-CONTAINING PROTEIN 2"/>
    <property type="match status" value="1"/>
</dbReference>
<dbReference type="Pfam" id="PF00581">
    <property type="entry name" value="Rhodanese"/>
    <property type="match status" value="1"/>
</dbReference>
<dbReference type="Pfam" id="PF17773">
    <property type="entry name" value="UPF0176_N"/>
    <property type="match status" value="1"/>
</dbReference>
<dbReference type="SMART" id="SM00450">
    <property type="entry name" value="RHOD"/>
    <property type="match status" value="1"/>
</dbReference>
<dbReference type="SUPFAM" id="SSF52821">
    <property type="entry name" value="Rhodanese/Cell cycle control phosphatase"/>
    <property type="match status" value="1"/>
</dbReference>
<dbReference type="PROSITE" id="PS50206">
    <property type="entry name" value="RHODANESE_3"/>
    <property type="match status" value="1"/>
</dbReference>
<gene>
    <name evidence="1" type="primary">trhO</name>
    <name type="ordered locus">Fphi_1841</name>
</gene>
<name>TRHO_FRAP2</name>
<evidence type="ECO:0000255" key="1">
    <source>
        <dbReference type="HAMAP-Rule" id="MF_00469"/>
    </source>
</evidence>
<evidence type="ECO:0000256" key="2">
    <source>
        <dbReference type="SAM" id="MobiDB-lite"/>
    </source>
</evidence>
<sequence>MSQIVVCAMYKFVTLEDYEAMRQPLLDTMIKNNVKGTLLLANEGINGTVAGSREGVNALLAYLKSDSRLADIDYKESYHQEMPFYRSKVKLKKEIVTLGIEEIDPNKVCGKYVEPKDWNALISDPETILVDTRNDYEIEIGTFKNAINPSTETFREFPEYVDKNLDPKKHKKVAMFCTGGIRCEKSTALMKAKGFDEVYHLKGGILKYLEEVPKEESMWEGECFVFDSRVAVNHDLEKGSYDQCFACRMPITEEDKKRPEYVKGISCHHCYDKVTEEQKARFAEREKQSQLAAERGFSHVGDDAKKLAKLNKQQKQQAKEIARKKAKSEI</sequence>
<comment type="function">
    <text evidence="1">Catalyzes oxygen-dependent 5-hydroxyuridine (ho5U) modification at position 34 in tRNAs.</text>
</comment>
<comment type="catalytic activity">
    <reaction evidence="1">
        <text>uridine(34) in tRNA + AH2 + O2 = 5-hydroxyuridine(34) in tRNA + A + H2O</text>
        <dbReference type="Rhea" id="RHEA:64224"/>
        <dbReference type="Rhea" id="RHEA-COMP:11727"/>
        <dbReference type="Rhea" id="RHEA-COMP:13381"/>
        <dbReference type="ChEBI" id="CHEBI:13193"/>
        <dbReference type="ChEBI" id="CHEBI:15377"/>
        <dbReference type="ChEBI" id="CHEBI:15379"/>
        <dbReference type="ChEBI" id="CHEBI:17499"/>
        <dbReference type="ChEBI" id="CHEBI:65315"/>
        <dbReference type="ChEBI" id="CHEBI:136877"/>
    </reaction>
</comment>
<comment type="similarity">
    <text evidence="1">Belongs to the TrhO family.</text>
</comment>
<feature type="chain" id="PRO_1000081189" description="tRNA uridine(34) hydroxylase">
    <location>
        <begin position="1"/>
        <end position="330"/>
    </location>
</feature>
<feature type="domain" description="Rhodanese" evidence="1">
    <location>
        <begin position="123"/>
        <end position="217"/>
    </location>
</feature>
<feature type="region of interest" description="Disordered" evidence="2">
    <location>
        <begin position="310"/>
        <end position="330"/>
    </location>
</feature>
<feature type="compositionally biased region" description="Basic and acidic residues" evidence="2">
    <location>
        <begin position="317"/>
        <end position="330"/>
    </location>
</feature>
<feature type="active site" description="Cysteine persulfide intermediate" evidence="1">
    <location>
        <position position="177"/>
    </location>
</feature>
<accession>B0U150</accession>
<keyword id="KW-0560">Oxidoreductase</keyword>
<keyword id="KW-0819">tRNA processing</keyword>
<protein>
    <recommendedName>
        <fullName evidence="1">tRNA uridine(34) hydroxylase</fullName>
        <ecNumber evidence="1">1.14.-.-</ecNumber>
    </recommendedName>
    <alternativeName>
        <fullName evidence="1">tRNA hydroxylation protein O</fullName>
    </alternativeName>
</protein>